<feature type="chain" id="PRO_0000172058" description="Putative pre-16S rRNA nuclease">
    <location>
        <begin position="1"/>
        <end position="138"/>
    </location>
</feature>
<feature type="mutagenesis site" description="Does not process pre-16S rRNA in 70S ribosomes, binds to pre-16S rRNA-containing ribosomes." evidence="4">
    <original>D</original>
    <variation>A</variation>
    <location>
        <position position="9"/>
    </location>
</feature>
<feature type="mutagenesis site" description="Does not process pre-16S rRNA in 70S ribosomes." evidence="4">
    <original>E</original>
    <variation>A</variation>
    <location>
        <position position="96"/>
    </location>
</feature>
<feature type="mutagenesis site" description="Does not process pre-16S rRNA in 70S ribosomes." evidence="4">
    <original>T</original>
    <variation>I</variation>
    <location>
        <position position="100"/>
    </location>
</feature>
<feature type="mutagenesis site" description="Allows cell growth, i.e. not toxic." evidence="3">
    <original>A</original>
    <variation>I</variation>
    <location>
        <position position="103"/>
    </location>
</feature>
<feature type="mutagenesis site" description="Allows cell growth, i.e. not toxic." evidence="3">
    <original>S</original>
    <variation>I</variation>
    <location>
        <position position="105"/>
    </location>
</feature>
<feature type="mutagenesis site" description="Does not process pre-16S rRNA in 70S ribosomes." evidence="4">
    <location>
        <begin position="108"/>
        <end position="115"/>
    </location>
</feature>
<feature type="mutagenesis site" description="Does not process pre-16S rRNA in 70S ribosomes, binds quite strongly to pre-16S rRNA-containing ribosomes." evidence="4">
    <original>D</original>
    <variation>A</variation>
    <location>
        <position position="122"/>
    </location>
</feature>
<feature type="mutagenesis site" description="Allows cell growth, i.e. not toxic." evidence="3">
    <original>S</original>
    <variation>A</variation>
    <location>
        <position position="125"/>
    </location>
</feature>
<feature type="strand" evidence="7">
    <location>
        <begin position="4"/>
        <end position="9"/>
    </location>
</feature>
<feature type="strand" evidence="7">
    <location>
        <begin position="12"/>
        <end position="21"/>
    </location>
</feature>
<feature type="turn" evidence="7">
    <location>
        <begin position="22"/>
        <end position="25"/>
    </location>
</feature>
<feature type="strand" evidence="7">
    <location>
        <begin position="26"/>
        <end position="36"/>
    </location>
</feature>
<feature type="helix" evidence="7">
    <location>
        <begin position="42"/>
        <end position="52"/>
    </location>
</feature>
<feature type="strand" evidence="7">
    <location>
        <begin position="55"/>
        <end position="63"/>
    </location>
</feature>
<feature type="strand" evidence="8">
    <location>
        <begin position="65"/>
        <end position="68"/>
    </location>
</feature>
<feature type="helix" evidence="7">
    <location>
        <begin position="71"/>
        <end position="87"/>
    </location>
</feature>
<feature type="strand" evidence="7">
    <location>
        <begin position="91"/>
        <end position="97"/>
    </location>
</feature>
<feature type="helix" evidence="7">
    <location>
        <begin position="118"/>
        <end position="121"/>
    </location>
</feature>
<feature type="helix" evidence="7">
    <location>
        <begin position="124"/>
        <end position="135"/>
    </location>
</feature>
<comment type="function">
    <text evidence="3 4">Involved in the processing of the 5'-end of pre-16S rRNA during 70S ribosome maturation (processing does not occur on total cellular RNA off the ribosome); may be a nuclease (PubMed:25545592). A temperature-sensitive yqgF mutant no longer grows when Rho or NusA are overproduced, and has reduced transcription of genes encoded downstream of Rho terminators; transcription increases again in the presence of the Rho inhibitor bicylomycin (PubMed:22353788).</text>
</comment>
<comment type="subunit">
    <text evidence="2">Monomer.</text>
</comment>
<comment type="subcellular location">
    <subcellularLocation>
        <location evidence="1">Cytoplasm</location>
    </subcellularLocation>
</comment>
<comment type="disruption phenotype">
    <text evidence="3">Essential, it cannot be disrupted.</text>
</comment>
<comment type="similarity">
    <text evidence="1">Belongs to the YqgF nuclease family.</text>
</comment>
<comment type="caution">
    <text evidence="5">Was originally suggested to be a nuclease that resolves Holliday junction intermediates during genetic recombination.</text>
</comment>
<comment type="sequence caution" evidence="6">
    <conflict type="erroneous initiation">
        <sequence resource="EMBL-CDS" id="AAA69116"/>
    </conflict>
    <text>Extended N-terminus.</text>
</comment>
<name>YQGF_ECOLI</name>
<sequence>MSGTLLAFDFGTKSIGVAVGQRITGTARPLPAIKAQDGTPDWNIIERLLKEWQPDEIIVGLPLNMDGTEQPLTARARKFANRIHGRFGVEVKLHDERLSTVEARSGLFEQGGYRALNKGKVDSASAVIILESYFEQGY</sequence>
<organism>
    <name type="scientific">Escherichia coli (strain K12)</name>
    <dbReference type="NCBI Taxonomy" id="83333"/>
    <lineage>
        <taxon>Bacteria</taxon>
        <taxon>Pseudomonadati</taxon>
        <taxon>Pseudomonadota</taxon>
        <taxon>Gammaproteobacteria</taxon>
        <taxon>Enterobacterales</taxon>
        <taxon>Enterobacteriaceae</taxon>
        <taxon>Escherichia</taxon>
    </lineage>
</organism>
<accession>P0A8I1</accession>
<accession>P52050</accession>
<accession>Q2M9P4</accession>
<gene>
    <name evidence="1" type="primary">yqgF</name>
    <name evidence="6" type="synonym">ruvX</name>
    <name type="ordered locus">b2949</name>
    <name type="ordered locus">JW2916</name>
</gene>
<keyword id="KW-0002">3D-structure</keyword>
<keyword id="KW-0963">Cytoplasm</keyword>
<keyword id="KW-0378">Hydrolase</keyword>
<keyword id="KW-0540">Nuclease</keyword>
<keyword id="KW-1185">Reference proteome</keyword>
<keyword id="KW-0690">Ribosome biogenesis</keyword>
<dbReference type="EC" id="3.1.-.-" evidence="1"/>
<dbReference type="EMBL" id="U28377">
    <property type="protein sequence ID" value="AAA69116.1"/>
    <property type="status" value="ALT_INIT"/>
    <property type="molecule type" value="Genomic_DNA"/>
</dbReference>
<dbReference type="EMBL" id="U00096">
    <property type="protein sequence ID" value="AAC75986.1"/>
    <property type="molecule type" value="Genomic_DNA"/>
</dbReference>
<dbReference type="EMBL" id="AP009048">
    <property type="protein sequence ID" value="BAE77012.1"/>
    <property type="molecule type" value="Genomic_DNA"/>
</dbReference>
<dbReference type="PIR" id="D65080">
    <property type="entry name" value="D65080"/>
</dbReference>
<dbReference type="RefSeq" id="NP_417424.1">
    <property type="nucleotide sequence ID" value="NC_000913.3"/>
</dbReference>
<dbReference type="RefSeq" id="WP_000017106.1">
    <property type="nucleotide sequence ID" value="NZ_STEB01000001.1"/>
</dbReference>
<dbReference type="PDB" id="1NMN">
    <property type="method" value="X-ray"/>
    <property type="resolution" value="2.30 A"/>
    <property type="chains" value="A/B=1-138"/>
</dbReference>
<dbReference type="PDB" id="1NU0">
    <property type="method" value="X-ray"/>
    <property type="resolution" value="1.60 A"/>
    <property type="chains" value="A/B=1-138"/>
</dbReference>
<dbReference type="PDB" id="1OVQ">
    <property type="method" value="NMR"/>
    <property type="chains" value="A=1-138"/>
</dbReference>
<dbReference type="PDBsum" id="1NMN"/>
<dbReference type="PDBsum" id="1NU0"/>
<dbReference type="PDBsum" id="1OVQ"/>
<dbReference type="SMR" id="P0A8I1"/>
<dbReference type="BioGRID" id="4259241">
    <property type="interactions" value="205"/>
</dbReference>
<dbReference type="FunCoup" id="P0A8I1">
    <property type="interactions" value="421"/>
</dbReference>
<dbReference type="IntAct" id="P0A8I1">
    <property type="interactions" value="9"/>
</dbReference>
<dbReference type="STRING" id="511145.b2949"/>
<dbReference type="jPOST" id="P0A8I1"/>
<dbReference type="PaxDb" id="511145-b2949"/>
<dbReference type="EnsemblBacteria" id="AAC75986">
    <property type="protein sequence ID" value="AAC75986"/>
    <property type="gene ID" value="b2949"/>
</dbReference>
<dbReference type="GeneID" id="86947798"/>
<dbReference type="GeneID" id="947439"/>
<dbReference type="KEGG" id="ecj:JW2916"/>
<dbReference type="KEGG" id="eco:b2949"/>
<dbReference type="KEGG" id="ecoc:C3026_16140"/>
<dbReference type="PATRIC" id="fig|1411691.4.peg.3784"/>
<dbReference type="EchoBASE" id="EB3075"/>
<dbReference type="eggNOG" id="COG0816">
    <property type="taxonomic scope" value="Bacteria"/>
</dbReference>
<dbReference type="HOGENOM" id="CLU_098240_3_0_6"/>
<dbReference type="InParanoid" id="P0A8I1"/>
<dbReference type="OMA" id="PMGWTAQ"/>
<dbReference type="OrthoDB" id="9796140at2"/>
<dbReference type="PhylomeDB" id="P0A8I1"/>
<dbReference type="BioCyc" id="EcoCyc:G7525-MONOMER"/>
<dbReference type="BioCyc" id="MetaCyc:G7525-MONOMER"/>
<dbReference type="EvolutionaryTrace" id="P0A8I1"/>
<dbReference type="PRO" id="PR:P0A8I1"/>
<dbReference type="Proteomes" id="UP000000625">
    <property type="component" value="Chromosome"/>
</dbReference>
<dbReference type="GO" id="GO:0005737">
    <property type="term" value="C:cytoplasm"/>
    <property type="evidence" value="ECO:0007669"/>
    <property type="project" value="UniProtKB-SubCell"/>
</dbReference>
<dbReference type="GO" id="GO:0008296">
    <property type="term" value="F:3'-5'-DNA exonuclease activity"/>
    <property type="evidence" value="ECO:0000314"/>
    <property type="project" value="EcoCyc"/>
</dbReference>
<dbReference type="GO" id="GO:0006974">
    <property type="term" value="P:DNA damage response"/>
    <property type="evidence" value="ECO:0000269"/>
    <property type="project" value="EcoCyc"/>
</dbReference>
<dbReference type="GO" id="GO:0042254">
    <property type="term" value="P:ribosome biogenesis"/>
    <property type="evidence" value="ECO:0000314"/>
    <property type="project" value="UniProtKB"/>
</dbReference>
<dbReference type="GO" id="GO:0000967">
    <property type="term" value="P:rRNA 5'-end processing"/>
    <property type="evidence" value="ECO:0000314"/>
    <property type="project" value="UniProtKB"/>
</dbReference>
<dbReference type="GO" id="GO:0031564">
    <property type="term" value="P:transcription antitermination"/>
    <property type="evidence" value="ECO:0000269"/>
    <property type="project" value="EcoCyc"/>
</dbReference>
<dbReference type="CDD" id="cd16964">
    <property type="entry name" value="YqgF"/>
    <property type="match status" value="1"/>
</dbReference>
<dbReference type="FunFam" id="3.30.420.140:FF:000002">
    <property type="entry name" value="Putative pre-16S rRNA nuclease"/>
    <property type="match status" value="1"/>
</dbReference>
<dbReference type="Gene3D" id="3.30.420.140">
    <property type="entry name" value="YqgF/RNase H-like domain"/>
    <property type="match status" value="1"/>
</dbReference>
<dbReference type="HAMAP" id="MF_00651">
    <property type="entry name" value="Nuclease_YqgF"/>
    <property type="match status" value="1"/>
</dbReference>
<dbReference type="InterPro" id="IPR012337">
    <property type="entry name" value="RNaseH-like_sf"/>
</dbReference>
<dbReference type="InterPro" id="IPR005227">
    <property type="entry name" value="YqgF"/>
</dbReference>
<dbReference type="InterPro" id="IPR006641">
    <property type="entry name" value="YqgF/RNaseH-like_dom"/>
</dbReference>
<dbReference type="InterPro" id="IPR037027">
    <property type="entry name" value="YqgF/RNaseH-like_dom_sf"/>
</dbReference>
<dbReference type="NCBIfam" id="TIGR00250">
    <property type="entry name" value="RNAse_H_YqgF"/>
    <property type="match status" value="1"/>
</dbReference>
<dbReference type="PANTHER" id="PTHR33317">
    <property type="entry name" value="POLYNUCLEOTIDYL TRANSFERASE, RIBONUCLEASE H-LIKE SUPERFAMILY PROTEIN"/>
    <property type="match status" value="1"/>
</dbReference>
<dbReference type="PANTHER" id="PTHR33317:SF4">
    <property type="entry name" value="POLYNUCLEOTIDYL TRANSFERASE, RIBONUCLEASE H-LIKE SUPERFAMILY PROTEIN"/>
    <property type="match status" value="1"/>
</dbReference>
<dbReference type="Pfam" id="PF03652">
    <property type="entry name" value="RuvX"/>
    <property type="match status" value="1"/>
</dbReference>
<dbReference type="SMART" id="SM00732">
    <property type="entry name" value="YqgFc"/>
    <property type="match status" value="1"/>
</dbReference>
<dbReference type="SUPFAM" id="SSF53098">
    <property type="entry name" value="Ribonuclease H-like"/>
    <property type="match status" value="1"/>
</dbReference>
<proteinExistence type="evidence at protein level"/>
<reference key="1">
    <citation type="journal article" date="1997" name="Science">
        <title>The complete genome sequence of Escherichia coli K-12.</title>
        <authorList>
            <person name="Blattner F.R."/>
            <person name="Plunkett G. III"/>
            <person name="Bloch C.A."/>
            <person name="Perna N.T."/>
            <person name="Burland V."/>
            <person name="Riley M."/>
            <person name="Collado-Vides J."/>
            <person name="Glasner J.D."/>
            <person name="Rode C.K."/>
            <person name="Mayhew G.F."/>
            <person name="Gregor J."/>
            <person name="Davis N.W."/>
            <person name="Kirkpatrick H.A."/>
            <person name="Goeden M.A."/>
            <person name="Rose D.J."/>
            <person name="Mau B."/>
            <person name="Shao Y."/>
        </authorList>
    </citation>
    <scope>NUCLEOTIDE SEQUENCE [LARGE SCALE GENOMIC DNA]</scope>
    <source>
        <strain>K12 / MG1655 / ATCC 47076</strain>
    </source>
</reference>
<reference key="2">
    <citation type="journal article" date="2006" name="Mol. Syst. Biol.">
        <title>Highly accurate genome sequences of Escherichia coli K-12 strains MG1655 and W3110.</title>
        <authorList>
            <person name="Hayashi K."/>
            <person name="Morooka N."/>
            <person name="Yamamoto Y."/>
            <person name="Fujita K."/>
            <person name="Isono K."/>
            <person name="Choi S."/>
            <person name="Ohtsubo E."/>
            <person name="Baba T."/>
            <person name="Wanner B.L."/>
            <person name="Mori H."/>
            <person name="Horiuchi T."/>
        </authorList>
    </citation>
    <scope>NUCLEOTIDE SEQUENCE [LARGE SCALE GENOMIC DNA]</scope>
    <source>
        <strain>K12 / W3110 / ATCC 27325 / DSM 5911</strain>
    </source>
</reference>
<reference key="3">
    <citation type="journal article" date="2000" name="Nucleic Acids Res.">
        <title>Holliday junction resolvases and related nucleases: identification of new families, phyletic distribution and evolutionary trajectories.</title>
        <authorList>
            <person name="Aravind L."/>
            <person name="Makarova K.S."/>
            <person name="Koonin E.V."/>
        </authorList>
    </citation>
    <scope>DISCUSSION OF POSSIBLE FUNCTION</scope>
</reference>
<reference key="4">
    <citation type="journal article" date="2012" name="J. Mol. Microbiol. Biotechnol.">
        <title>Mutations in the essential Escherichia coli gene, yqgF, and their effects on transcription.</title>
        <authorList>
            <person name="Iwamoto A."/>
            <person name="Osawa A."/>
            <person name="Kawai M."/>
            <person name="Honda H."/>
            <person name="Yoshida S."/>
            <person name="Furuya N."/>
            <person name="Kato J."/>
        </authorList>
    </citation>
    <scope>FUNCTION</scope>
    <scope>DISRUPTION PHENOTYPE</scope>
    <scope>MUTAGENESIS OF ALA-103; SER-105 AND SER-125</scope>
</reference>
<reference key="5">
    <citation type="journal article" date="2015" name="J. Mol. Biol.">
        <title>Novel essential gene Involved in 16S rRNA processing in Escherichia coli.</title>
        <authorList>
            <person name="Kurata T."/>
            <person name="Nakanishi S."/>
            <person name="Hashimoto M."/>
            <person name="Taoka M."/>
            <person name="Yamazaki Y."/>
            <person name="Isobe T."/>
            <person name="Kato J."/>
        </authorList>
    </citation>
    <scope>FUNCTION</scope>
    <scope>MUTAGENESIS OF ASP-9; GLU-96; THR-100; 108-PHE--ALA-115 AND ASP-122</scope>
    <source>
        <strain>K12 / MG1655 / ATCC 47076</strain>
    </source>
</reference>
<reference key="6">
    <citation type="journal article" date="2002" name="J. Biomol. NMR">
        <title>Backbone 1H, 15N and 13C resonance assignments of YqgF, an Escherichia coli protein of unknown structure and function.</title>
        <authorList>
            <person name="Liu D."/>
            <person name="Repaka P."/>
            <person name="Taremi S.S."/>
            <person name="Wyss D.F."/>
        </authorList>
    </citation>
    <scope>STRUCTURE BY NMR</scope>
</reference>
<reference key="7">
    <citation type="journal article" date="2003" name="J. Biomol. NMR">
        <title>Solution structure of the hypothetical protein YqgF from Escherichia coli reveals an RNAse H fold.</title>
        <authorList>
            <person name="Liu D."/>
            <person name="Wang Y.-S."/>
            <person name="Wyss D.F."/>
        </authorList>
    </citation>
    <scope>STRUCTURE BY NMR</scope>
    <scope>SUBUNIT</scope>
</reference>
<protein>
    <recommendedName>
        <fullName evidence="1 6">Putative pre-16S rRNA nuclease</fullName>
        <ecNumber evidence="1">3.1.-.-</ecNumber>
    </recommendedName>
</protein>
<evidence type="ECO:0000255" key="1">
    <source>
        <dbReference type="HAMAP-Rule" id="MF_00651"/>
    </source>
</evidence>
<evidence type="ECO:0000269" key="2">
    <source>
    </source>
</evidence>
<evidence type="ECO:0000269" key="3">
    <source>
    </source>
</evidence>
<evidence type="ECO:0000269" key="4">
    <source>
    </source>
</evidence>
<evidence type="ECO:0000303" key="5">
    <source>
    </source>
</evidence>
<evidence type="ECO:0000305" key="6"/>
<evidence type="ECO:0007829" key="7">
    <source>
        <dbReference type="PDB" id="1NU0"/>
    </source>
</evidence>
<evidence type="ECO:0007829" key="8">
    <source>
        <dbReference type="PDB" id="1OVQ"/>
    </source>
</evidence>